<keyword id="KW-0067">ATP-binding</keyword>
<keyword id="KW-0963">Cytoplasm</keyword>
<keyword id="KW-0275">Fatty acid biosynthesis</keyword>
<keyword id="KW-0276">Fatty acid metabolism</keyword>
<keyword id="KW-0444">Lipid biosynthesis</keyword>
<keyword id="KW-0443">Lipid metabolism</keyword>
<keyword id="KW-0547">Nucleotide-binding</keyword>
<keyword id="KW-0808">Transferase</keyword>
<sequence>MNWITNYVRPKINSILGRREIPENLWIKDPTSGEMIFHKDLEANQFVAPNSGHHMRISAKNRLMHFFDDGVYTALENPKVVTDPLKFRDEKRYIDRLKDYRSKLGVDDNILSARGTIEGLPIIATVQDFAFMGGSLGMASGEAIIKAFDTAIAERRPLVLFSASGGARMQEGTLSLMQMPRTTVAIEMLKEAKLPYIVVLTNPTTGGVTASYAMLGDIHIAEPGAMIGFAGPRVIQQTIRETLPEGFQSSEYLLEHGMIDMVVSRLEMKTTIARLLRLMMKRPAVFNPSDPSPTDSQTSLSTTKAA</sequence>
<protein>
    <recommendedName>
        <fullName evidence="1">Acetyl-coenzyme A carboxylase carboxyl transferase subunit beta</fullName>
        <shortName evidence="1">ACCase subunit beta</shortName>
        <shortName evidence="1">Acetyl-CoA carboxylase carboxyltransferase subunit beta</shortName>
        <ecNumber evidence="1">2.1.3.15</ecNumber>
    </recommendedName>
</protein>
<name>ACCD_BARGA</name>
<comment type="function">
    <text evidence="1">Component of the acetyl coenzyme A carboxylase (ACC) complex. Biotin carboxylase (BC) catalyzes the carboxylation of biotin on its carrier protein (BCCP) and then the CO(2) group is transferred by the transcarboxylase to acetyl-CoA to form malonyl-CoA.</text>
</comment>
<comment type="catalytic activity">
    <reaction evidence="1">
        <text>N(6)-carboxybiotinyl-L-lysyl-[protein] + acetyl-CoA = N(6)-biotinyl-L-lysyl-[protein] + malonyl-CoA</text>
        <dbReference type="Rhea" id="RHEA:54728"/>
        <dbReference type="Rhea" id="RHEA-COMP:10505"/>
        <dbReference type="Rhea" id="RHEA-COMP:10506"/>
        <dbReference type="ChEBI" id="CHEBI:57288"/>
        <dbReference type="ChEBI" id="CHEBI:57384"/>
        <dbReference type="ChEBI" id="CHEBI:83144"/>
        <dbReference type="ChEBI" id="CHEBI:83145"/>
        <dbReference type="EC" id="2.1.3.15"/>
    </reaction>
</comment>
<comment type="pathway">
    <text evidence="1">Lipid metabolism; malonyl-CoA biosynthesis; malonyl-CoA from acetyl-CoA: step 1/1.</text>
</comment>
<comment type="subunit">
    <text evidence="1">Acetyl-CoA carboxylase is a heterohexamer composed of biotin carboxyl carrier protein (AccB), biotin carboxylase (AccC) and two subunits each of ACCase subunit alpha (AccA) and ACCase subunit beta (AccD).</text>
</comment>
<comment type="subcellular location">
    <subcellularLocation>
        <location evidence="1">Cytoplasm</location>
    </subcellularLocation>
</comment>
<comment type="similarity">
    <text evidence="1">Belongs to the AccD/PCCB family.</text>
</comment>
<dbReference type="EC" id="2.1.3.15" evidence="1"/>
<dbReference type="EMBL" id="CP001562">
    <property type="protein sequence ID" value="ACS50425.1"/>
    <property type="molecule type" value="Genomic_DNA"/>
</dbReference>
<dbReference type="RefSeq" id="WP_012754464.1">
    <property type="nucleotide sequence ID" value="NC_012846.1"/>
</dbReference>
<dbReference type="SMR" id="C6AB58"/>
<dbReference type="STRING" id="634504.Bgr_00330"/>
<dbReference type="KEGG" id="bgr:Bgr_00330"/>
<dbReference type="eggNOG" id="COG0777">
    <property type="taxonomic scope" value="Bacteria"/>
</dbReference>
<dbReference type="HOGENOM" id="CLU_015486_1_0_5"/>
<dbReference type="OrthoDB" id="9772975at2"/>
<dbReference type="UniPathway" id="UPA00655">
    <property type="reaction ID" value="UER00711"/>
</dbReference>
<dbReference type="Proteomes" id="UP000001489">
    <property type="component" value="Chromosome"/>
</dbReference>
<dbReference type="GO" id="GO:0009329">
    <property type="term" value="C:acetate CoA-transferase complex"/>
    <property type="evidence" value="ECO:0007669"/>
    <property type="project" value="TreeGrafter"/>
</dbReference>
<dbReference type="GO" id="GO:0003989">
    <property type="term" value="F:acetyl-CoA carboxylase activity"/>
    <property type="evidence" value="ECO:0007669"/>
    <property type="project" value="InterPro"/>
</dbReference>
<dbReference type="GO" id="GO:0005524">
    <property type="term" value="F:ATP binding"/>
    <property type="evidence" value="ECO:0007669"/>
    <property type="project" value="UniProtKB-KW"/>
</dbReference>
<dbReference type="GO" id="GO:0016743">
    <property type="term" value="F:carboxyl- or carbamoyltransferase activity"/>
    <property type="evidence" value="ECO:0007669"/>
    <property type="project" value="UniProtKB-UniRule"/>
</dbReference>
<dbReference type="GO" id="GO:0006633">
    <property type="term" value="P:fatty acid biosynthetic process"/>
    <property type="evidence" value="ECO:0007669"/>
    <property type="project" value="UniProtKB-KW"/>
</dbReference>
<dbReference type="GO" id="GO:2001295">
    <property type="term" value="P:malonyl-CoA biosynthetic process"/>
    <property type="evidence" value="ECO:0007669"/>
    <property type="project" value="UniProtKB-UniRule"/>
</dbReference>
<dbReference type="Gene3D" id="3.90.226.10">
    <property type="entry name" value="2-enoyl-CoA Hydratase, Chain A, domain 1"/>
    <property type="match status" value="1"/>
</dbReference>
<dbReference type="HAMAP" id="MF_01395">
    <property type="entry name" value="AcetylCoA_CT_beta"/>
    <property type="match status" value="1"/>
</dbReference>
<dbReference type="InterPro" id="IPR034733">
    <property type="entry name" value="AcCoA_carboxyl_beta"/>
</dbReference>
<dbReference type="InterPro" id="IPR000438">
    <property type="entry name" value="Acetyl_CoA_COase_Trfase_b_su"/>
</dbReference>
<dbReference type="InterPro" id="IPR029045">
    <property type="entry name" value="ClpP/crotonase-like_dom_sf"/>
</dbReference>
<dbReference type="InterPro" id="IPR011762">
    <property type="entry name" value="COA_CT_N"/>
</dbReference>
<dbReference type="NCBIfam" id="TIGR00515">
    <property type="entry name" value="accD"/>
    <property type="match status" value="1"/>
</dbReference>
<dbReference type="PANTHER" id="PTHR42995">
    <property type="entry name" value="ACETYL-COENZYME A CARBOXYLASE CARBOXYL TRANSFERASE SUBUNIT BETA, CHLOROPLASTIC"/>
    <property type="match status" value="1"/>
</dbReference>
<dbReference type="PANTHER" id="PTHR42995:SF5">
    <property type="entry name" value="ACETYL-COENZYME A CARBOXYLASE CARBOXYL TRANSFERASE SUBUNIT BETA, CHLOROPLASTIC"/>
    <property type="match status" value="1"/>
</dbReference>
<dbReference type="Pfam" id="PF01039">
    <property type="entry name" value="Carboxyl_trans"/>
    <property type="match status" value="1"/>
</dbReference>
<dbReference type="PRINTS" id="PR01070">
    <property type="entry name" value="ACCCTRFRASEB"/>
</dbReference>
<dbReference type="SUPFAM" id="SSF52096">
    <property type="entry name" value="ClpP/crotonase"/>
    <property type="match status" value="1"/>
</dbReference>
<dbReference type="PROSITE" id="PS50980">
    <property type="entry name" value="COA_CT_NTER"/>
    <property type="match status" value="1"/>
</dbReference>
<proteinExistence type="inferred from homology"/>
<evidence type="ECO:0000255" key="1">
    <source>
        <dbReference type="HAMAP-Rule" id="MF_01395"/>
    </source>
</evidence>
<evidence type="ECO:0000255" key="2">
    <source>
        <dbReference type="PROSITE-ProRule" id="PRU01136"/>
    </source>
</evidence>
<evidence type="ECO:0000256" key="3">
    <source>
        <dbReference type="SAM" id="MobiDB-lite"/>
    </source>
</evidence>
<accession>C6AB58</accession>
<gene>
    <name evidence="1" type="primary">accD</name>
    <name type="ordered locus">Bgr_00330</name>
</gene>
<reference key="1">
    <citation type="journal article" date="2009" name="PLoS Genet.">
        <title>Run-off replication of host-adaptability genes is associated with gene transfer agents in the genome of mouse-infecting Bartonella grahamii.</title>
        <authorList>
            <person name="Berglund E.C."/>
            <person name="Frank A.C."/>
            <person name="Calteau A."/>
            <person name="Vinnere Pettersson O."/>
            <person name="Granberg F."/>
            <person name="Eriksson A.-S."/>
            <person name="Naeslund K."/>
            <person name="Holmberg M."/>
            <person name="Lindroos H."/>
            <person name="Andersson S.G."/>
        </authorList>
    </citation>
    <scope>NUCLEOTIDE SEQUENCE [LARGE SCALE GENOMIC DNA]</scope>
    <source>
        <strain>as4aup</strain>
    </source>
</reference>
<feature type="chain" id="PRO_0000389691" description="Acetyl-coenzyme A carboxylase carboxyl transferase subunit beta">
    <location>
        <begin position="1"/>
        <end position="306"/>
    </location>
</feature>
<feature type="domain" description="CoA carboxyltransferase N-terminal" evidence="2">
    <location>
        <begin position="25"/>
        <end position="294"/>
    </location>
</feature>
<feature type="region of interest" description="Disordered" evidence="3">
    <location>
        <begin position="286"/>
        <end position="306"/>
    </location>
</feature>
<feature type="compositionally biased region" description="Low complexity" evidence="3">
    <location>
        <begin position="288"/>
        <end position="306"/>
    </location>
</feature>
<organism>
    <name type="scientific">Bartonella grahamii (strain as4aup)</name>
    <dbReference type="NCBI Taxonomy" id="634504"/>
    <lineage>
        <taxon>Bacteria</taxon>
        <taxon>Pseudomonadati</taxon>
        <taxon>Pseudomonadota</taxon>
        <taxon>Alphaproteobacteria</taxon>
        <taxon>Hyphomicrobiales</taxon>
        <taxon>Bartonellaceae</taxon>
        <taxon>Bartonella</taxon>
    </lineage>
</organism>